<gene>
    <name evidence="4" type="primary">xrn-2</name>
    <name evidence="4" type="ORF">CBG20900</name>
</gene>
<dbReference type="EC" id="3.1.13.-"/>
<dbReference type="EMBL" id="HE600928">
    <property type="protein sequence ID" value="CAP37834.2"/>
    <property type="molecule type" value="Genomic_DNA"/>
</dbReference>
<dbReference type="SMR" id="Q60SG7"/>
<dbReference type="FunCoup" id="Q60SG7">
    <property type="interactions" value="3103"/>
</dbReference>
<dbReference type="STRING" id="6238.Q60SG7"/>
<dbReference type="EnsemblMetazoa" id="CBG20900.1">
    <property type="protein sequence ID" value="CBG20900.1"/>
    <property type="gene ID" value="WBGene00039805"/>
</dbReference>
<dbReference type="WormBase" id="CBG20900">
    <property type="protein sequence ID" value="CBP30614"/>
    <property type="gene ID" value="WBGene00039805"/>
    <property type="gene designation" value="Cbr-xrn-2"/>
</dbReference>
<dbReference type="eggNOG" id="KOG2044">
    <property type="taxonomic scope" value="Eukaryota"/>
</dbReference>
<dbReference type="HOGENOM" id="CLU_006038_1_2_1"/>
<dbReference type="InParanoid" id="Q60SG7"/>
<dbReference type="OMA" id="ITHDMVV"/>
<dbReference type="Proteomes" id="UP000008549">
    <property type="component" value="Unassembled WGS sequence"/>
</dbReference>
<dbReference type="GO" id="GO:0005730">
    <property type="term" value="C:nucleolus"/>
    <property type="evidence" value="ECO:0000250"/>
    <property type="project" value="UniProtKB"/>
</dbReference>
<dbReference type="GO" id="GO:0005634">
    <property type="term" value="C:nucleus"/>
    <property type="evidence" value="ECO:0000318"/>
    <property type="project" value="GO_Central"/>
</dbReference>
<dbReference type="GO" id="GO:0008409">
    <property type="term" value="F:5'-3' exonuclease activity"/>
    <property type="evidence" value="ECO:0000250"/>
    <property type="project" value="UniProtKB"/>
</dbReference>
<dbReference type="GO" id="GO:0004534">
    <property type="term" value="F:5'-3' RNA exonuclease activity"/>
    <property type="evidence" value="ECO:0000318"/>
    <property type="project" value="GO_Central"/>
</dbReference>
<dbReference type="GO" id="GO:0003723">
    <property type="term" value="F:RNA binding"/>
    <property type="evidence" value="ECO:0000318"/>
    <property type="project" value="GO_Central"/>
</dbReference>
<dbReference type="GO" id="GO:0008270">
    <property type="term" value="F:zinc ion binding"/>
    <property type="evidence" value="ECO:0007669"/>
    <property type="project" value="UniProtKB-KW"/>
</dbReference>
<dbReference type="GO" id="GO:0010587">
    <property type="term" value="P:miRNA catabolic process"/>
    <property type="evidence" value="ECO:0007669"/>
    <property type="project" value="EnsemblMetazoa"/>
</dbReference>
<dbReference type="GO" id="GO:0006397">
    <property type="term" value="P:mRNA processing"/>
    <property type="evidence" value="ECO:0007669"/>
    <property type="project" value="UniProtKB-KW"/>
</dbReference>
<dbReference type="GO" id="GO:0000956">
    <property type="term" value="P:nuclear-transcribed mRNA catabolic process"/>
    <property type="evidence" value="ECO:0000318"/>
    <property type="project" value="GO_Central"/>
</dbReference>
<dbReference type="GO" id="GO:0040034">
    <property type="term" value="P:regulation of development, heterochronic"/>
    <property type="evidence" value="ECO:0007669"/>
    <property type="project" value="EnsemblMetazoa"/>
</dbReference>
<dbReference type="GO" id="GO:0040028">
    <property type="term" value="P:regulation of vulval development"/>
    <property type="evidence" value="ECO:0007669"/>
    <property type="project" value="EnsemblMetazoa"/>
</dbReference>
<dbReference type="GO" id="GO:0006369">
    <property type="term" value="P:termination of RNA polymerase II transcription"/>
    <property type="evidence" value="ECO:0000250"/>
    <property type="project" value="UniProtKB"/>
</dbReference>
<dbReference type="CDD" id="cd18673">
    <property type="entry name" value="PIN_XRN1-2-like"/>
    <property type="match status" value="1"/>
</dbReference>
<dbReference type="FunFam" id="1.25.40.1050:FF:000002">
    <property type="entry name" value="5'-3' exoribonuclease"/>
    <property type="match status" value="1"/>
</dbReference>
<dbReference type="FunFam" id="3.40.50.12390:FF:000001">
    <property type="entry name" value="5'-3' exoribonuclease"/>
    <property type="match status" value="1"/>
</dbReference>
<dbReference type="FunFam" id="3.40.50.12390:FF:000003">
    <property type="entry name" value="5'-3' exoribonuclease"/>
    <property type="match status" value="1"/>
</dbReference>
<dbReference type="Gene3D" id="1.25.40.1050">
    <property type="match status" value="1"/>
</dbReference>
<dbReference type="Gene3D" id="3.40.50.12390">
    <property type="match status" value="2"/>
</dbReference>
<dbReference type="InterPro" id="IPR027073">
    <property type="entry name" value="5_3_exoribonuclease"/>
</dbReference>
<dbReference type="InterPro" id="IPR041412">
    <property type="entry name" value="Xrn1_helical"/>
</dbReference>
<dbReference type="InterPro" id="IPR004859">
    <property type="entry name" value="Xrn1_N"/>
</dbReference>
<dbReference type="InterPro" id="IPR017151">
    <property type="entry name" value="Xrn2/3/4"/>
</dbReference>
<dbReference type="PANTHER" id="PTHR12341:SF41">
    <property type="entry name" value="5'-3' EXORIBONUCLEASE 2"/>
    <property type="match status" value="1"/>
</dbReference>
<dbReference type="PANTHER" id="PTHR12341">
    <property type="entry name" value="5'-&gt;3' EXORIBONUCLEASE"/>
    <property type="match status" value="1"/>
</dbReference>
<dbReference type="Pfam" id="PF17846">
    <property type="entry name" value="XRN_M"/>
    <property type="match status" value="2"/>
</dbReference>
<dbReference type="Pfam" id="PF03159">
    <property type="entry name" value="XRN_N"/>
    <property type="match status" value="1"/>
</dbReference>
<dbReference type="PIRSF" id="PIRSF037239">
    <property type="entry name" value="Exonuclease_Xrn2"/>
    <property type="match status" value="1"/>
</dbReference>
<evidence type="ECO:0000250" key="1">
    <source>
        <dbReference type="UniProtKB" id="Q9U299"/>
    </source>
</evidence>
<evidence type="ECO:0000256" key="2">
    <source>
        <dbReference type="SAM" id="MobiDB-lite"/>
    </source>
</evidence>
<evidence type="ECO:0000305" key="3"/>
<evidence type="ECO:0000312" key="4">
    <source>
        <dbReference type="WormBase" id="CBG20900"/>
    </source>
</evidence>
<feature type="chain" id="PRO_0000249915" description="5'-3' exoribonuclease 2 homolog">
    <location>
        <begin position="1"/>
        <end position="976"/>
    </location>
</feature>
<feature type="zinc finger region" description="CCHC-type">
    <location>
        <begin position="264"/>
        <end position="281"/>
    </location>
</feature>
<feature type="region of interest" description="Disordered" evidence="2">
    <location>
        <begin position="411"/>
        <end position="442"/>
    </location>
</feature>
<feature type="region of interest" description="Interaction with paxt-1" evidence="1">
    <location>
        <begin position="535"/>
        <end position="788"/>
    </location>
</feature>
<feature type="region of interest" description="Disordered" evidence="2">
    <location>
        <begin position="815"/>
        <end position="976"/>
    </location>
</feature>
<feature type="compositionally biased region" description="Basic and acidic residues" evidence="2">
    <location>
        <begin position="411"/>
        <end position="420"/>
    </location>
</feature>
<feature type="compositionally biased region" description="Low complexity" evidence="2">
    <location>
        <begin position="856"/>
        <end position="866"/>
    </location>
</feature>
<comment type="function">
    <text evidence="1">Possesses 5'-&gt;3' exoribonuclease activity. Plays a role in maintenance of steady-state concentration and turnover of microRNAs (miRNA) by degradation of mature miRNA. Degradation role is enhanced when in complex with paxt-1. Partially redundant to xrn-1 in miRNA guide strand degradation. Implicated in differential regulation of mRNAs such as let-7 by controlling the accumulation of mature miRNA. Positively regulates molting of the pharyngeal cuticle.</text>
</comment>
<comment type="subunit">
    <text evidence="1">Interacts with paxt-1 (via N-terminus); the interaction is direct and results in stabilization of xrn-2 in the complex.</text>
</comment>
<comment type="subcellular location">
    <subcellularLocation>
        <location evidence="1">Nucleus</location>
    </subcellularLocation>
</comment>
<comment type="similarity">
    <text evidence="3">Belongs to the 5'-3' exonuclease family. XRN2/RAT1 subfamily.</text>
</comment>
<name>XRN2_CAEBR</name>
<organism>
    <name type="scientific">Caenorhabditis briggsae</name>
    <dbReference type="NCBI Taxonomy" id="6238"/>
    <lineage>
        <taxon>Eukaryota</taxon>
        <taxon>Metazoa</taxon>
        <taxon>Ecdysozoa</taxon>
        <taxon>Nematoda</taxon>
        <taxon>Chromadorea</taxon>
        <taxon>Rhabditida</taxon>
        <taxon>Rhabditina</taxon>
        <taxon>Rhabditomorpha</taxon>
        <taxon>Rhabditoidea</taxon>
        <taxon>Rhabditidae</taxon>
        <taxon>Peloderinae</taxon>
        <taxon>Caenorhabditis</taxon>
    </lineage>
</organism>
<proteinExistence type="inferred from homology"/>
<protein>
    <recommendedName>
        <fullName>5'-3' exoribonuclease 2 homolog</fullName>
        <ecNumber>3.1.13.-</ecNumber>
    </recommendedName>
</protein>
<reference key="1">
    <citation type="journal article" date="2003" name="PLoS Biol.">
        <title>The genome sequence of Caenorhabditis briggsae: a platform for comparative genomics.</title>
        <authorList>
            <person name="Stein L.D."/>
            <person name="Bao Z."/>
            <person name="Blasiar D."/>
            <person name="Blumenthal T."/>
            <person name="Brent M.R."/>
            <person name="Chen N."/>
            <person name="Chinwalla A."/>
            <person name="Clarke L."/>
            <person name="Clee C."/>
            <person name="Coghlan A."/>
            <person name="Coulson A."/>
            <person name="D'Eustachio P."/>
            <person name="Fitch D.H.A."/>
            <person name="Fulton L.A."/>
            <person name="Fulton R.E."/>
            <person name="Griffiths-Jones S."/>
            <person name="Harris T.W."/>
            <person name="Hillier L.W."/>
            <person name="Kamath R."/>
            <person name="Kuwabara P.E."/>
            <person name="Mardis E.R."/>
            <person name="Marra M.A."/>
            <person name="Miner T.L."/>
            <person name="Minx P."/>
            <person name="Mullikin J.C."/>
            <person name="Plumb R.W."/>
            <person name="Rogers J."/>
            <person name="Schein J.E."/>
            <person name="Sohrmann M."/>
            <person name="Spieth J."/>
            <person name="Stajich J.E."/>
            <person name="Wei C."/>
            <person name="Willey D."/>
            <person name="Wilson R.K."/>
            <person name="Durbin R.M."/>
            <person name="Waterston R.H."/>
        </authorList>
    </citation>
    <scope>NUCLEOTIDE SEQUENCE [LARGE SCALE GENOMIC DNA]</scope>
    <source>
        <strain>AF16</strain>
    </source>
</reference>
<accession>Q60SG7</accession>
<accession>A8XYW7</accession>
<sequence length="976" mass="111453">MGVPAFFRWLTKKYPATVVNANEDRQRGVDGRRVPVDCTQPNPNFQEFDNLYLDMNGIIHPCTHPEDRPAPKNEDEMFALIFEYIDRIFSIVRPRRLLYMAIDGVAPRAKMNQQRSRRFRASKEMAEKAASIEEQRRRLIAEGIAVPQKKKDEEEAHFDSNCITPGTPFMARLADALRYYIHDRVTNDPAWANIEIILSDANVPGEGEHKIMDYIRKQRGNPAHDPNTVHCLCGADADLIMLGIATHEANFNIIREEFVPNQPRACELCGQYGHELKECRGAENDTDLGDEYCKPEQREKNFIFLRIPVLREYLEKEMAMPNLPFQFNLERALDDWVFLCFFVGNDFLPHLPSLEIREGAIDRLIKLYKEMVYEMKGYLTKDGIPELDRVEMIMRGLGKVEDEIFKRRQQDEERFKENQKNKKARMQQYGRGRGGRGRGRGQPAYVPSHGILAPMSAPMHHSGESTRQMASDARQAAMQFNATNDANAQAAANLKALLNVKGEQSPAEVAAQESRKRKAEQPIIITDEDEEPKDDIRLYESGWKERYYRAKFDVGSDDVDFRHRVAWAYVEGLCWVLRYYYQGCSSWDWYFPYHYAPFASDFETVGEFKPDFTRPTKPFNPLEQLMSVFPAASKQHLPVEWQKLMTEDESPIIDLYPADFRIDLNGKKYAWQGVALLPFVDEQRLLETLKSVYPTLTDEEKYRNTRGPNRIFIGRNHKSFAFFQQVAESKSNDLVDLDPSLLNGVSGKISYDSTATAPGLPFPSPVSHEECQDLPTNCGICVLYEDPEYPANYVFPAVRLDGAKEAEKTLRPEDWNERRDGRFNPTIGFNRNAPRGGLDLSGQRHINHHVRGAMYDRQGGNDNYRGGYRGGYQGGYDDRRGGRGGGGYRGGYNDSRPDFGRNYAGREGGGPQHYHEHQPGGGHGRPHDQQPYQDNRRGGGYHRGGRGNGPTGYQRPPYRGGRGRGGGGYQGNSSWR</sequence>
<keyword id="KW-0269">Exonuclease</keyword>
<keyword id="KW-0378">Hydrolase</keyword>
<keyword id="KW-0479">Metal-binding</keyword>
<keyword id="KW-0507">mRNA processing</keyword>
<keyword id="KW-0540">Nuclease</keyword>
<keyword id="KW-0539">Nucleus</keyword>
<keyword id="KW-1185">Reference proteome</keyword>
<keyword id="KW-0804">Transcription</keyword>
<keyword id="KW-0805">Transcription regulation</keyword>
<keyword id="KW-0806">Transcription termination</keyword>
<keyword id="KW-0862">Zinc</keyword>
<keyword id="KW-0863">Zinc-finger</keyword>